<feature type="chain" id="PRO_0000320657" description="Protein NATD1">
    <location>
        <begin position="1"/>
        <end position="110"/>
    </location>
</feature>
<feature type="domain" description="N-acetyltransferase" evidence="1">
    <location>
        <begin position="19"/>
        <end position="109"/>
    </location>
</feature>
<organism>
    <name type="scientific">Mus musculus</name>
    <name type="common">Mouse</name>
    <dbReference type="NCBI Taxonomy" id="10090"/>
    <lineage>
        <taxon>Eukaryota</taxon>
        <taxon>Metazoa</taxon>
        <taxon>Chordata</taxon>
        <taxon>Craniata</taxon>
        <taxon>Vertebrata</taxon>
        <taxon>Euteleostomi</taxon>
        <taxon>Mammalia</taxon>
        <taxon>Eutheria</taxon>
        <taxon>Euarchontoglires</taxon>
        <taxon>Glires</taxon>
        <taxon>Rodentia</taxon>
        <taxon>Myomorpha</taxon>
        <taxon>Muroidea</taxon>
        <taxon>Muridae</taxon>
        <taxon>Murinae</taxon>
        <taxon>Mus</taxon>
        <taxon>Mus</taxon>
    </lineage>
</organism>
<gene>
    <name type="primary">Natd1</name>
    <name type="synonym">Gm16515</name>
    <name type="synonym">Gtlf3b</name>
</gene>
<protein>
    <recommendedName>
        <fullName>Protein NATD1</fullName>
    </recommendedName>
    <alternativeName>
        <fullName>Gene trap locus protein F3-2</fullName>
    </alternativeName>
    <alternativeName>
        <fullName>Gene trap locus protein F3b</fullName>
    </alternativeName>
    <alternativeName>
        <fullName>N-acetyltransferase domain-containing protein 1</fullName>
    </alternativeName>
</protein>
<dbReference type="EMBL" id="AK004720">
    <property type="protein sequence ID" value="BAB23503.1"/>
    <property type="molecule type" value="mRNA"/>
</dbReference>
<dbReference type="EMBL" id="AK080453">
    <property type="protein sequence ID" value="BAC37922.1"/>
    <property type="molecule type" value="mRNA"/>
</dbReference>
<dbReference type="EMBL" id="AK089179">
    <property type="protein sequence ID" value="BAC40780.1"/>
    <property type="molecule type" value="mRNA"/>
</dbReference>
<dbReference type="EMBL" id="AL603830">
    <property type="status" value="NOT_ANNOTATED_CDS"/>
    <property type="molecule type" value="Genomic_DNA"/>
</dbReference>
<dbReference type="EMBL" id="BC034332">
    <property type="protein sequence ID" value="AAH34332.1"/>
    <property type="molecule type" value="mRNA"/>
</dbReference>
<dbReference type="EMBL" id="BC038816">
    <property type="protein sequence ID" value="AAH38816.1"/>
    <property type="molecule type" value="mRNA"/>
</dbReference>
<dbReference type="CCDS" id="CCDS24802.1"/>
<dbReference type="RefSeq" id="NP_079570.1">
    <property type="nucleotide sequence ID" value="NM_025294.5"/>
</dbReference>
<dbReference type="SMR" id="Q9DBW3"/>
<dbReference type="FunCoup" id="Q9DBW3">
    <property type="interactions" value="5"/>
</dbReference>
<dbReference type="STRING" id="10090.ENSMUSP00000019075"/>
<dbReference type="iPTMnet" id="Q9DBW3"/>
<dbReference type="PhosphoSitePlus" id="Q9DBW3"/>
<dbReference type="REPRODUCTION-2DPAGE" id="Q9DBW3"/>
<dbReference type="PaxDb" id="10090-ENSMUSP00000019075"/>
<dbReference type="ProteomicsDB" id="252779"/>
<dbReference type="Pumba" id="Q9DBW3"/>
<dbReference type="Antibodypedia" id="75937">
    <property type="antibodies" value="5 antibodies from 4 providers"/>
</dbReference>
<dbReference type="DNASU" id="24083"/>
<dbReference type="Ensembl" id="ENSMUST00000019075.4">
    <property type="protein sequence ID" value="ENSMUSP00000019075.4"/>
    <property type="gene ID" value="ENSMUSG00000018931.4"/>
</dbReference>
<dbReference type="GeneID" id="24083"/>
<dbReference type="KEGG" id="mmu:24083"/>
<dbReference type="UCSC" id="uc007jgu.2">
    <property type="organism name" value="mouse"/>
</dbReference>
<dbReference type="AGR" id="MGI:1344388"/>
<dbReference type="CTD" id="256302"/>
<dbReference type="MGI" id="MGI:1344388">
    <property type="gene designation" value="Natd1"/>
</dbReference>
<dbReference type="VEuPathDB" id="HostDB:ENSMUSG00000018931"/>
<dbReference type="eggNOG" id="ENOG502S2NM">
    <property type="taxonomic scope" value="Eukaryota"/>
</dbReference>
<dbReference type="GeneTree" id="ENSGT00390000014840"/>
<dbReference type="HOGENOM" id="CLU_132888_1_1_1"/>
<dbReference type="InParanoid" id="Q9DBW3"/>
<dbReference type="OMA" id="EIMTITH"/>
<dbReference type="OrthoDB" id="74247at2759"/>
<dbReference type="PhylomeDB" id="Q9DBW3"/>
<dbReference type="TreeFam" id="TF314063"/>
<dbReference type="BioGRID-ORCS" id="24083">
    <property type="hits" value="1 hit in 71 CRISPR screens"/>
</dbReference>
<dbReference type="PRO" id="PR:Q9DBW3"/>
<dbReference type="Proteomes" id="UP000000589">
    <property type="component" value="Chromosome 11"/>
</dbReference>
<dbReference type="RNAct" id="Q9DBW3">
    <property type="molecule type" value="protein"/>
</dbReference>
<dbReference type="Bgee" id="ENSMUSG00000018931">
    <property type="expression patterns" value="Expressed in animal zygote and 256 other cell types or tissues"/>
</dbReference>
<dbReference type="FunFam" id="3.40.630.30:FF:000030">
    <property type="entry name" value="NATD1 isoform 1"/>
    <property type="match status" value="1"/>
</dbReference>
<dbReference type="Gene3D" id="3.40.630.30">
    <property type="match status" value="1"/>
</dbReference>
<dbReference type="InterPro" id="IPR016181">
    <property type="entry name" value="Acyl_CoA_acyltransferase"/>
</dbReference>
<dbReference type="InterPro" id="IPR045057">
    <property type="entry name" value="Gcn5-rel_NAT"/>
</dbReference>
<dbReference type="InterPro" id="IPR031165">
    <property type="entry name" value="GNAT_YJDJ"/>
</dbReference>
<dbReference type="PANTHER" id="PTHR31435">
    <property type="entry name" value="PROTEIN NATD1"/>
    <property type="match status" value="1"/>
</dbReference>
<dbReference type="PANTHER" id="PTHR31435:SF9">
    <property type="entry name" value="PROTEIN NATD1"/>
    <property type="match status" value="1"/>
</dbReference>
<dbReference type="Pfam" id="PF14542">
    <property type="entry name" value="Acetyltransf_CG"/>
    <property type="match status" value="1"/>
</dbReference>
<dbReference type="SUPFAM" id="SSF55729">
    <property type="entry name" value="Acyl-CoA N-acyltransferases (Nat)"/>
    <property type="match status" value="1"/>
</dbReference>
<dbReference type="PROSITE" id="PS51729">
    <property type="entry name" value="GNAT_YJDJ"/>
    <property type="match status" value="1"/>
</dbReference>
<sequence length="110" mass="12731">MAHATPPSALEQGGPIRVEHDRQRRQFSVRLNGCHDRAVLLYEYVGKRIVDLQHTEVPDAYRGRGIAKHLAKAALDFVVEEDLKAHLTCWYIQKYVKENPLPQYLERLQP</sequence>
<accession>Q9DBW3</accession>
<reference key="1">
    <citation type="journal article" date="2005" name="Science">
        <title>The transcriptional landscape of the mammalian genome.</title>
        <authorList>
            <person name="Carninci P."/>
            <person name="Kasukawa T."/>
            <person name="Katayama S."/>
            <person name="Gough J."/>
            <person name="Frith M.C."/>
            <person name="Maeda N."/>
            <person name="Oyama R."/>
            <person name="Ravasi T."/>
            <person name="Lenhard B."/>
            <person name="Wells C."/>
            <person name="Kodzius R."/>
            <person name="Shimokawa K."/>
            <person name="Bajic V.B."/>
            <person name="Brenner S.E."/>
            <person name="Batalov S."/>
            <person name="Forrest A.R."/>
            <person name="Zavolan M."/>
            <person name="Davis M.J."/>
            <person name="Wilming L.G."/>
            <person name="Aidinis V."/>
            <person name="Allen J.E."/>
            <person name="Ambesi-Impiombato A."/>
            <person name="Apweiler R."/>
            <person name="Aturaliya R.N."/>
            <person name="Bailey T.L."/>
            <person name="Bansal M."/>
            <person name="Baxter L."/>
            <person name="Beisel K.W."/>
            <person name="Bersano T."/>
            <person name="Bono H."/>
            <person name="Chalk A.M."/>
            <person name="Chiu K.P."/>
            <person name="Choudhary V."/>
            <person name="Christoffels A."/>
            <person name="Clutterbuck D.R."/>
            <person name="Crowe M.L."/>
            <person name="Dalla E."/>
            <person name="Dalrymple B.P."/>
            <person name="de Bono B."/>
            <person name="Della Gatta G."/>
            <person name="di Bernardo D."/>
            <person name="Down T."/>
            <person name="Engstrom P."/>
            <person name="Fagiolini M."/>
            <person name="Faulkner G."/>
            <person name="Fletcher C.F."/>
            <person name="Fukushima T."/>
            <person name="Furuno M."/>
            <person name="Futaki S."/>
            <person name="Gariboldi M."/>
            <person name="Georgii-Hemming P."/>
            <person name="Gingeras T.R."/>
            <person name="Gojobori T."/>
            <person name="Green R.E."/>
            <person name="Gustincich S."/>
            <person name="Harbers M."/>
            <person name="Hayashi Y."/>
            <person name="Hensch T.K."/>
            <person name="Hirokawa N."/>
            <person name="Hill D."/>
            <person name="Huminiecki L."/>
            <person name="Iacono M."/>
            <person name="Ikeo K."/>
            <person name="Iwama A."/>
            <person name="Ishikawa T."/>
            <person name="Jakt M."/>
            <person name="Kanapin A."/>
            <person name="Katoh M."/>
            <person name="Kawasawa Y."/>
            <person name="Kelso J."/>
            <person name="Kitamura H."/>
            <person name="Kitano H."/>
            <person name="Kollias G."/>
            <person name="Krishnan S.P."/>
            <person name="Kruger A."/>
            <person name="Kummerfeld S.K."/>
            <person name="Kurochkin I.V."/>
            <person name="Lareau L.F."/>
            <person name="Lazarevic D."/>
            <person name="Lipovich L."/>
            <person name="Liu J."/>
            <person name="Liuni S."/>
            <person name="McWilliam S."/>
            <person name="Madan Babu M."/>
            <person name="Madera M."/>
            <person name="Marchionni L."/>
            <person name="Matsuda H."/>
            <person name="Matsuzawa S."/>
            <person name="Miki H."/>
            <person name="Mignone F."/>
            <person name="Miyake S."/>
            <person name="Morris K."/>
            <person name="Mottagui-Tabar S."/>
            <person name="Mulder N."/>
            <person name="Nakano N."/>
            <person name="Nakauchi H."/>
            <person name="Ng P."/>
            <person name="Nilsson R."/>
            <person name="Nishiguchi S."/>
            <person name="Nishikawa S."/>
            <person name="Nori F."/>
            <person name="Ohara O."/>
            <person name="Okazaki Y."/>
            <person name="Orlando V."/>
            <person name="Pang K.C."/>
            <person name="Pavan W.J."/>
            <person name="Pavesi G."/>
            <person name="Pesole G."/>
            <person name="Petrovsky N."/>
            <person name="Piazza S."/>
            <person name="Reed J."/>
            <person name="Reid J.F."/>
            <person name="Ring B.Z."/>
            <person name="Ringwald M."/>
            <person name="Rost B."/>
            <person name="Ruan Y."/>
            <person name="Salzberg S.L."/>
            <person name="Sandelin A."/>
            <person name="Schneider C."/>
            <person name="Schoenbach C."/>
            <person name="Sekiguchi K."/>
            <person name="Semple C.A."/>
            <person name="Seno S."/>
            <person name="Sessa L."/>
            <person name="Sheng Y."/>
            <person name="Shibata Y."/>
            <person name="Shimada H."/>
            <person name="Shimada K."/>
            <person name="Silva D."/>
            <person name="Sinclair B."/>
            <person name="Sperling S."/>
            <person name="Stupka E."/>
            <person name="Sugiura K."/>
            <person name="Sultana R."/>
            <person name="Takenaka Y."/>
            <person name="Taki K."/>
            <person name="Tammoja K."/>
            <person name="Tan S.L."/>
            <person name="Tang S."/>
            <person name="Taylor M.S."/>
            <person name="Tegner J."/>
            <person name="Teichmann S.A."/>
            <person name="Ueda H.R."/>
            <person name="van Nimwegen E."/>
            <person name="Verardo R."/>
            <person name="Wei C.L."/>
            <person name="Yagi K."/>
            <person name="Yamanishi H."/>
            <person name="Zabarovsky E."/>
            <person name="Zhu S."/>
            <person name="Zimmer A."/>
            <person name="Hide W."/>
            <person name="Bult C."/>
            <person name="Grimmond S.M."/>
            <person name="Teasdale R.D."/>
            <person name="Liu E.T."/>
            <person name="Brusic V."/>
            <person name="Quackenbush J."/>
            <person name="Wahlestedt C."/>
            <person name="Mattick J.S."/>
            <person name="Hume D.A."/>
            <person name="Kai C."/>
            <person name="Sasaki D."/>
            <person name="Tomaru Y."/>
            <person name="Fukuda S."/>
            <person name="Kanamori-Katayama M."/>
            <person name="Suzuki M."/>
            <person name="Aoki J."/>
            <person name="Arakawa T."/>
            <person name="Iida J."/>
            <person name="Imamura K."/>
            <person name="Itoh M."/>
            <person name="Kato T."/>
            <person name="Kawaji H."/>
            <person name="Kawagashira N."/>
            <person name="Kawashima T."/>
            <person name="Kojima M."/>
            <person name="Kondo S."/>
            <person name="Konno H."/>
            <person name="Nakano K."/>
            <person name="Ninomiya N."/>
            <person name="Nishio T."/>
            <person name="Okada M."/>
            <person name="Plessy C."/>
            <person name="Shibata K."/>
            <person name="Shiraki T."/>
            <person name="Suzuki S."/>
            <person name="Tagami M."/>
            <person name="Waki K."/>
            <person name="Watahiki A."/>
            <person name="Okamura-Oho Y."/>
            <person name="Suzuki H."/>
            <person name="Kawai J."/>
            <person name="Hayashizaki Y."/>
        </authorList>
    </citation>
    <scope>NUCLEOTIDE SEQUENCE [LARGE SCALE MRNA]</scope>
    <source>
        <strain>C57BL/6J</strain>
        <strain>NOD</strain>
        <tissue>Cerebellum</tissue>
        <tissue>Lung</tissue>
    </source>
</reference>
<reference key="2">
    <citation type="journal article" date="2009" name="PLoS Biol.">
        <title>Lineage-specific biology revealed by a finished genome assembly of the mouse.</title>
        <authorList>
            <person name="Church D.M."/>
            <person name="Goodstadt L."/>
            <person name="Hillier L.W."/>
            <person name="Zody M.C."/>
            <person name="Goldstein S."/>
            <person name="She X."/>
            <person name="Bult C.J."/>
            <person name="Agarwala R."/>
            <person name="Cherry J.L."/>
            <person name="DiCuccio M."/>
            <person name="Hlavina W."/>
            <person name="Kapustin Y."/>
            <person name="Meric P."/>
            <person name="Maglott D."/>
            <person name="Birtle Z."/>
            <person name="Marques A.C."/>
            <person name="Graves T."/>
            <person name="Zhou S."/>
            <person name="Teague B."/>
            <person name="Potamousis K."/>
            <person name="Churas C."/>
            <person name="Place M."/>
            <person name="Herschleb J."/>
            <person name="Runnheim R."/>
            <person name="Forrest D."/>
            <person name="Amos-Landgraf J."/>
            <person name="Schwartz D.C."/>
            <person name="Cheng Z."/>
            <person name="Lindblad-Toh K."/>
            <person name="Eichler E.E."/>
            <person name="Ponting C.P."/>
        </authorList>
    </citation>
    <scope>NUCLEOTIDE SEQUENCE [LARGE SCALE GENOMIC DNA]</scope>
    <source>
        <strain>C57BL/6J</strain>
    </source>
</reference>
<reference key="3">
    <citation type="journal article" date="2004" name="Genome Res.">
        <title>The status, quality, and expansion of the NIH full-length cDNA project: the Mammalian Gene Collection (MGC).</title>
        <authorList>
            <consortium name="The MGC Project Team"/>
        </authorList>
    </citation>
    <scope>NUCLEOTIDE SEQUENCE [LARGE SCALE MRNA]</scope>
    <source>
        <tissue>Mammary tumor</tissue>
    </source>
</reference>
<reference key="4">
    <citation type="journal article" date="1999" name="Dev. Genet.">
        <title>Gene trap screening using negative selection: identification of two tandem, differentially expressed loci with potential hematopoietic function.</title>
        <authorList>
            <person name="Cannon J.P."/>
            <person name="Colicos S.M."/>
            <person name="Belmont J.W."/>
        </authorList>
    </citation>
    <scope>TISSUE SPECIFICITY</scope>
    <scope>DEVELOPMENTAL STAGE</scope>
</reference>
<reference key="5">
    <citation type="journal article" date="2010" name="Cell">
        <title>A tissue-specific atlas of mouse protein phosphorylation and expression.</title>
        <authorList>
            <person name="Huttlin E.L."/>
            <person name="Jedrychowski M.P."/>
            <person name="Elias J.E."/>
            <person name="Goswami T."/>
            <person name="Rad R."/>
            <person name="Beausoleil S.A."/>
            <person name="Villen J."/>
            <person name="Haas W."/>
            <person name="Sowa M.E."/>
            <person name="Gygi S.P."/>
        </authorList>
    </citation>
    <scope>IDENTIFICATION BY MASS SPECTROMETRY [LARGE SCALE ANALYSIS]</scope>
    <source>
        <tissue>Kidney</tissue>
        <tissue>Testis</tissue>
    </source>
</reference>
<comment type="tissue specificity">
    <text evidence="2">Expressed in the heart, testis, kidney and lung.</text>
</comment>
<comment type="developmental stage">
    <text evidence="2">Detected at multiple sites in embryonic day 10.5 embryos, including the genital ridges, the aortic endothelium and endothelium-associated cell clusters within the aortic lumen.</text>
</comment>
<comment type="similarity">
    <text evidence="3">Belongs to the NATD1 family.</text>
</comment>
<evidence type="ECO:0000255" key="1">
    <source>
        <dbReference type="PROSITE-ProRule" id="PRU00532"/>
    </source>
</evidence>
<evidence type="ECO:0000269" key="2">
    <source>
    </source>
</evidence>
<evidence type="ECO:0000305" key="3"/>
<proteinExistence type="evidence at protein level"/>
<name>NATD1_MOUSE</name>
<keyword id="KW-1185">Reference proteome</keyword>